<organism>
    <name type="scientific">Mycobacterium leprae (strain TN)</name>
    <dbReference type="NCBI Taxonomy" id="272631"/>
    <lineage>
        <taxon>Bacteria</taxon>
        <taxon>Bacillati</taxon>
        <taxon>Actinomycetota</taxon>
        <taxon>Actinomycetes</taxon>
        <taxon>Mycobacteriales</taxon>
        <taxon>Mycobacteriaceae</taxon>
        <taxon>Mycobacterium</taxon>
    </lineage>
</organism>
<reference key="1">
    <citation type="submission" date="1994-03" db="EMBL/GenBank/DDBJ databases">
        <authorList>
            <person name="Smith D.R."/>
            <person name="Robison K."/>
        </authorList>
    </citation>
    <scope>NUCLEOTIDE SEQUENCE [GENOMIC DNA]</scope>
</reference>
<reference key="2">
    <citation type="journal article" date="2001" name="Nature">
        <title>Massive gene decay in the leprosy bacillus.</title>
        <authorList>
            <person name="Cole S.T."/>
            <person name="Eiglmeier K."/>
            <person name="Parkhill J."/>
            <person name="James K.D."/>
            <person name="Thomson N.R."/>
            <person name="Wheeler P.R."/>
            <person name="Honore N."/>
            <person name="Garnier T."/>
            <person name="Churcher C.M."/>
            <person name="Harris D.E."/>
            <person name="Mungall K.L."/>
            <person name="Basham D."/>
            <person name="Brown D."/>
            <person name="Chillingworth T."/>
            <person name="Connor R."/>
            <person name="Davies R.M."/>
            <person name="Devlin K."/>
            <person name="Duthoy S."/>
            <person name="Feltwell T."/>
            <person name="Fraser A."/>
            <person name="Hamlin N."/>
            <person name="Holroyd S."/>
            <person name="Hornsby T."/>
            <person name="Jagels K."/>
            <person name="Lacroix C."/>
            <person name="Maclean J."/>
            <person name="Moule S."/>
            <person name="Murphy L.D."/>
            <person name="Oliver K."/>
            <person name="Quail M.A."/>
            <person name="Rajandream M.A."/>
            <person name="Rutherford K.M."/>
            <person name="Rutter S."/>
            <person name="Seeger K."/>
            <person name="Simon S."/>
            <person name="Simmonds M."/>
            <person name="Skelton J."/>
            <person name="Squares R."/>
            <person name="Squares S."/>
            <person name="Stevens K."/>
            <person name="Taylor K."/>
            <person name="Whitehead S."/>
            <person name="Woodward J.R."/>
            <person name="Barrell B.G."/>
        </authorList>
    </citation>
    <scope>NUCLEOTIDE SEQUENCE [LARGE SCALE GENOMIC DNA]</scope>
    <source>
        <strain>TN</strain>
    </source>
</reference>
<protein>
    <recommendedName>
        <fullName>3'-phosphoadenosine 5'-phosphate phosphatase</fullName>
        <shortName>PAP phosphatase</shortName>
        <ecNumber>3.1.3.7</ecNumber>
    </recommendedName>
    <alternativeName>
        <fullName>3'(2'),5'-bisphosphate nucleotidase</fullName>
    </alternativeName>
    <alternativeName>
        <fullName>3'(2'),5-bisphosphonucleoside 3'(2')-phosphohydrolase</fullName>
    </alternativeName>
    <alternativeName>
        <fullName>D-fructose-1,6-bisphosphate 1-phosphohydrolase</fullName>
    </alternativeName>
    <alternativeName>
        <fullName>DPNPase</fullName>
    </alternativeName>
    <alternativeName>
        <fullName>Fructose-1,6-bisphosphatase</fullName>
        <shortName>FBPase</shortName>
        <ecNumber>3.1.3.11</ecNumber>
    </alternativeName>
    <alternativeName>
        <fullName>Inositol-1-monophosphatase</fullName>
        <shortName>I-1-Pase</shortName>
        <shortName>IMPase</shortName>
        <ecNumber>3.1.3.25</ecNumber>
    </alternativeName>
    <alternativeName>
        <fullName>Inositol-1-phosphatase</fullName>
    </alternativeName>
</protein>
<feature type="chain" id="PRO_0000142550" description="3'-phosphoadenosine 5'-phosphate phosphatase">
    <location>
        <begin position="1"/>
        <end position="271"/>
    </location>
</feature>
<feature type="binding site" evidence="1">
    <location>
        <position position="73"/>
    </location>
    <ligand>
        <name>Mg(2+)</name>
        <dbReference type="ChEBI" id="CHEBI:18420"/>
        <label>1</label>
    </ligand>
</feature>
<feature type="binding site" evidence="1">
    <location>
        <position position="73"/>
    </location>
    <ligand>
        <name>substrate</name>
    </ligand>
</feature>
<feature type="binding site" evidence="1">
    <location>
        <position position="91"/>
    </location>
    <ligand>
        <name>Mg(2+)</name>
        <dbReference type="ChEBI" id="CHEBI:18420"/>
        <label>1</label>
    </ligand>
</feature>
<feature type="binding site" evidence="1">
    <location>
        <position position="91"/>
    </location>
    <ligand>
        <name>Mg(2+)</name>
        <dbReference type="ChEBI" id="CHEBI:18420"/>
        <label>2</label>
    </ligand>
</feature>
<feature type="binding site" evidence="1">
    <location>
        <begin position="93"/>
        <end position="96"/>
    </location>
    <ligand>
        <name>substrate</name>
    </ligand>
</feature>
<feature type="binding site" evidence="1">
    <location>
        <position position="93"/>
    </location>
    <ligand>
        <name>Mg(2+)</name>
        <dbReference type="ChEBI" id="CHEBI:18420"/>
        <label>1</label>
    </ligand>
</feature>
<feature type="binding site" evidence="1">
    <location>
        <position position="94"/>
    </location>
    <ligand>
        <name>Mg(2+)</name>
        <dbReference type="ChEBI" id="CHEBI:18420"/>
        <label>2</label>
    </ligand>
</feature>
<feature type="binding site" evidence="1">
    <location>
        <position position="216"/>
    </location>
    <ligand>
        <name>Mg(2+)</name>
        <dbReference type="ChEBI" id="CHEBI:18420"/>
        <label>2</label>
    </ligand>
</feature>
<feature type="binding site" evidence="1">
    <location>
        <position position="216"/>
    </location>
    <ligand>
        <name>substrate</name>
    </ligand>
</feature>
<accession>P46726</accession>
<accession>Q9CC39</accession>
<name>CYSQ_MYCLE</name>
<gene>
    <name type="primary">cysQ</name>
    <name type="ordered locus">ML1301</name>
    <name type="ORF">B2126_C3_229</name>
</gene>
<dbReference type="EC" id="3.1.3.7"/>
<dbReference type="EC" id="3.1.3.11"/>
<dbReference type="EC" id="3.1.3.25"/>
<dbReference type="EMBL" id="U00017">
    <property type="protein sequence ID" value="AAA17202.1"/>
    <property type="status" value="ALT_INIT"/>
    <property type="molecule type" value="Genomic_DNA"/>
</dbReference>
<dbReference type="EMBL" id="AL583921">
    <property type="protein sequence ID" value="CAC31682.1"/>
    <property type="molecule type" value="Genomic_DNA"/>
</dbReference>
<dbReference type="PIR" id="G87071">
    <property type="entry name" value="G87071"/>
</dbReference>
<dbReference type="RefSeq" id="NP_301935.1">
    <property type="nucleotide sequence ID" value="NC_002677.1"/>
</dbReference>
<dbReference type="RefSeq" id="WP_010908256.1">
    <property type="nucleotide sequence ID" value="NC_002677.1"/>
</dbReference>
<dbReference type="SMR" id="P46726"/>
<dbReference type="STRING" id="272631.gene:17575135"/>
<dbReference type="KEGG" id="mle:ML1301"/>
<dbReference type="PATRIC" id="fig|272631.5.peg.2403"/>
<dbReference type="Leproma" id="ML1301"/>
<dbReference type="eggNOG" id="COG1218">
    <property type="taxonomic scope" value="Bacteria"/>
</dbReference>
<dbReference type="HOGENOM" id="CLU_071517_0_0_11"/>
<dbReference type="OrthoDB" id="9772456at2"/>
<dbReference type="UniPathway" id="UPA00097"/>
<dbReference type="Proteomes" id="UP000000806">
    <property type="component" value="Chromosome"/>
</dbReference>
<dbReference type="GO" id="GO:0008441">
    <property type="term" value="F:3'(2'),5'-bisphosphate nucleotidase activity"/>
    <property type="evidence" value="ECO:0007669"/>
    <property type="project" value="UniProtKB-EC"/>
</dbReference>
<dbReference type="GO" id="GO:0042132">
    <property type="term" value="F:fructose 1,6-bisphosphate 1-phosphatase activity"/>
    <property type="evidence" value="ECO:0007669"/>
    <property type="project" value="UniProtKB-EC"/>
</dbReference>
<dbReference type="GO" id="GO:0052834">
    <property type="term" value="F:inositol monophosphate phosphatase activity"/>
    <property type="evidence" value="ECO:0007669"/>
    <property type="project" value="UniProtKB-EC"/>
</dbReference>
<dbReference type="GO" id="GO:0046872">
    <property type="term" value="F:metal ion binding"/>
    <property type="evidence" value="ECO:0007669"/>
    <property type="project" value="UniProtKB-KW"/>
</dbReference>
<dbReference type="GO" id="GO:0050427">
    <property type="term" value="P:3'-phosphoadenosine 5'-phosphosulfate metabolic process"/>
    <property type="evidence" value="ECO:0007669"/>
    <property type="project" value="TreeGrafter"/>
</dbReference>
<dbReference type="GO" id="GO:0000103">
    <property type="term" value="P:sulfate assimilation"/>
    <property type="evidence" value="ECO:0007669"/>
    <property type="project" value="UniProtKB-UniPathway"/>
</dbReference>
<dbReference type="CDD" id="cd01638">
    <property type="entry name" value="CysQ"/>
    <property type="match status" value="1"/>
</dbReference>
<dbReference type="Gene3D" id="3.40.190.80">
    <property type="match status" value="1"/>
</dbReference>
<dbReference type="Gene3D" id="3.30.540.10">
    <property type="entry name" value="Fructose-1,6-Bisphosphatase, subunit A, domain 1"/>
    <property type="match status" value="1"/>
</dbReference>
<dbReference type="InterPro" id="IPR050725">
    <property type="entry name" value="CysQ/Inositol_MonoPase"/>
</dbReference>
<dbReference type="InterPro" id="IPR020583">
    <property type="entry name" value="Inositol_monoP_metal-BS"/>
</dbReference>
<dbReference type="InterPro" id="IPR000760">
    <property type="entry name" value="Inositol_monophosphatase-like"/>
</dbReference>
<dbReference type="PANTHER" id="PTHR43028">
    <property type="entry name" value="3'(2'),5'-BISPHOSPHATE NUCLEOTIDASE 1"/>
    <property type="match status" value="1"/>
</dbReference>
<dbReference type="PANTHER" id="PTHR43028:SF5">
    <property type="entry name" value="3'(2'),5'-BISPHOSPHATE NUCLEOTIDASE 1"/>
    <property type="match status" value="1"/>
</dbReference>
<dbReference type="Pfam" id="PF00459">
    <property type="entry name" value="Inositol_P"/>
    <property type="match status" value="1"/>
</dbReference>
<dbReference type="SUPFAM" id="SSF56655">
    <property type="entry name" value="Carbohydrate phosphatase"/>
    <property type="match status" value="1"/>
</dbReference>
<dbReference type="PROSITE" id="PS00629">
    <property type="entry name" value="IMP_1"/>
    <property type="match status" value="1"/>
</dbReference>
<evidence type="ECO:0000250" key="1"/>
<evidence type="ECO:0000305" key="2"/>
<proteinExistence type="inferred from homology"/>
<comment type="function">
    <text evidence="1">Phosphatase with a broad specificity. Its primary physiological function is to dephosphorylate 3'-phosphoadenosine 5'-phosphate (PAP) and 3'-phosphoadenosine 5'-phosphosulfate (PAPS). Thus, plays a role in mycobacterial sulfur metabolism, since it can serve as a key regulator of the sulfate assimilation pathway by controlling the pools of PAP and PAPS in the cell. To a lesser extent, is also able to hydrolyze inositol 1-phosphate (I-1-P), fructose 1,6-bisphosphate (FBP) (to fructose 6-phosphate (F-6-P)) and AMP in vitro, but this might not be significant in vivo (By similarity).</text>
</comment>
<comment type="catalytic activity">
    <reaction>
        <text>adenosine 3',5'-bisphosphate + H2O = AMP + phosphate</text>
        <dbReference type="Rhea" id="RHEA:10040"/>
        <dbReference type="ChEBI" id="CHEBI:15377"/>
        <dbReference type="ChEBI" id="CHEBI:43474"/>
        <dbReference type="ChEBI" id="CHEBI:58343"/>
        <dbReference type="ChEBI" id="CHEBI:456215"/>
        <dbReference type="EC" id="3.1.3.7"/>
    </reaction>
</comment>
<comment type="catalytic activity">
    <reaction>
        <text>beta-D-fructose 1,6-bisphosphate + H2O = beta-D-fructose 6-phosphate + phosphate</text>
        <dbReference type="Rhea" id="RHEA:11064"/>
        <dbReference type="ChEBI" id="CHEBI:15377"/>
        <dbReference type="ChEBI" id="CHEBI:32966"/>
        <dbReference type="ChEBI" id="CHEBI:43474"/>
        <dbReference type="ChEBI" id="CHEBI:57634"/>
        <dbReference type="EC" id="3.1.3.11"/>
    </reaction>
</comment>
<comment type="catalytic activity">
    <reaction>
        <text>a myo-inositol phosphate + H2O = myo-inositol + phosphate</text>
        <dbReference type="Rhea" id="RHEA:24056"/>
        <dbReference type="ChEBI" id="CHEBI:15377"/>
        <dbReference type="ChEBI" id="CHEBI:17268"/>
        <dbReference type="ChEBI" id="CHEBI:43474"/>
        <dbReference type="ChEBI" id="CHEBI:84139"/>
        <dbReference type="EC" id="3.1.3.25"/>
    </reaction>
</comment>
<comment type="cofactor">
    <cofactor evidence="1">
        <name>Mg(2+)</name>
        <dbReference type="ChEBI" id="CHEBI:18420"/>
    </cofactor>
</comment>
<comment type="pathway">
    <text>Sulfur metabolism; sulfate assimilation.</text>
</comment>
<comment type="subunit">
    <text evidence="1">Homodimer.</text>
</comment>
<comment type="similarity">
    <text evidence="2">Belongs to the inositol monophosphatase superfamily.</text>
</comment>
<comment type="sequence caution" evidence="2">
    <conflict type="erroneous initiation">
        <sequence resource="EMBL-CDS" id="AAA17202"/>
    </conflict>
</comment>
<keyword id="KW-0378">Hydrolase</keyword>
<keyword id="KW-0460">Magnesium</keyword>
<keyword id="KW-0479">Metal-binding</keyword>
<keyword id="KW-1185">Reference proteome</keyword>
<sequence length="271" mass="29119">MASHDKRDYQAELTDAALAADLATAAGELLLEIREEIGFDQPRALGDAGDRLANSLLLSRLRAERPGDAVLSEEAHDDRVRLQAGRVWIIDPLDGTREFSTAGRTDWAVHIALWQRTTGGVADGRREITDAAVALPARGNRVYRSDTVTAGAVTGGVPNILRIAVSATRPPTILHRIRQKLAIEPVAIGSAGAKAMAVVDGDVDAYLHVGGQWEWDSAAPAGVVLAAGMHASRLDGSPLRYNQLDPYLPDFVMCRADIAPILLGVIREVWQ</sequence>